<gene>
    <name type="primary">GYRBM</name>
    <name type="ordered locus">At5g04130</name>
    <name type="ORF">F21E1_50</name>
</gene>
<sequence length="732" mass="81053">MALLQRASYLRLYYLRLMGSRPRLFSSSLSPALHRHSSTLSSPPFSSPSPSFRLKFQLTSVLSQRLIQRNAISSRFLSTEASQETTTSKGYSSEQIQVLEGLDPVRKRPGMYIGSTGSRGLHHLVYEILDNAIDEAQAGYASKVDVVLHADGSVSVVDNGRGIPTDLHPATKKSSLETVLTVLHAGGKFGGTSSGYSVSGGLHGVGLSVVNALSEALEVSVWRDGMEHKQNYSRGKPITTLTCRVLPLESKGTKGTSIRFWPDKEVFTTAIEFDHNTIAGRIRELAFLNPKVTISLKKEDDDPEKTQYSEYSFAGGLTEYVSWLNTDKNPIHDVLGFRREINGATVDVALQWCSDAYSDTMLGYANSIRTIDGGTHIEGVKASLTRTLNTLAKKSKTVKEKDISLSGEHVREGLTCIVSVKVPNPEFEGQTKTRLGNPEVRKIVDQSVQEYLTEFLELHPDILESIISKSLNAYKAALAAKRARELVRSKSVLKSSSLPGKLADCSSTDPEVSEIFIVEGDSAGGSAKQGRDRRFQAILPLRGKILNIERKDEAAMYKNEEIQNLILGLGLGVKGEDFKKENLRYHKIIILTDADVDGAHIRTLLLTFFFRYQRALFDAGCIYVGVPPLFKVERGKNAQYCYDDADLKKITSNFPANASYNIQRFKGLGEMMPEQLWETTMNPETRILKQLVVDDIAEANMTFSSLMGARVDVRKELIKNAATRINLQRLDI</sequence>
<reference key="1">
    <citation type="journal article" date="2000" name="Nature">
        <title>Sequence and analysis of chromosome 5 of the plant Arabidopsis thaliana.</title>
        <authorList>
            <person name="Tabata S."/>
            <person name="Kaneko T."/>
            <person name="Nakamura Y."/>
            <person name="Kotani H."/>
            <person name="Kato T."/>
            <person name="Asamizu E."/>
            <person name="Miyajima N."/>
            <person name="Sasamoto S."/>
            <person name="Kimura T."/>
            <person name="Hosouchi T."/>
            <person name="Kawashima K."/>
            <person name="Kohara M."/>
            <person name="Matsumoto M."/>
            <person name="Matsuno A."/>
            <person name="Muraki A."/>
            <person name="Nakayama S."/>
            <person name="Nakazaki N."/>
            <person name="Naruo K."/>
            <person name="Okumura S."/>
            <person name="Shinpo S."/>
            <person name="Takeuchi C."/>
            <person name="Wada T."/>
            <person name="Watanabe A."/>
            <person name="Yamada M."/>
            <person name="Yasuda M."/>
            <person name="Sato S."/>
            <person name="de la Bastide M."/>
            <person name="Huang E."/>
            <person name="Spiegel L."/>
            <person name="Gnoj L."/>
            <person name="O'Shaughnessy A."/>
            <person name="Preston R."/>
            <person name="Habermann K."/>
            <person name="Murray J."/>
            <person name="Johnson D."/>
            <person name="Rohlfing T."/>
            <person name="Nelson J."/>
            <person name="Stoneking T."/>
            <person name="Pepin K."/>
            <person name="Spieth J."/>
            <person name="Sekhon M."/>
            <person name="Armstrong J."/>
            <person name="Becker M."/>
            <person name="Belter E."/>
            <person name="Cordum H."/>
            <person name="Cordes M."/>
            <person name="Courtney L."/>
            <person name="Courtney W."/>
            <person name="Dante M."/>
            <person name="Du H."/>
            <person name="Edwards J."/>
            <person name="Fryman J."/>
            <person name="Haakensen B."/>
            <person name="Lamar E."/>
            <person name="Latreille P."/>
            <person name="Leonard S."/>
            <person name="Meyer R."/>
            <person name="Mulvaney E."/>
            <person name="Ozersky P."/>
            <person name="Riley A."/>
            <person name="Strowmatt C."/>
            <person name="Wagner-McPherson C."/>
            <person name="Wollam A."/>
            <person name="Yoakum M."/>
            <person name="Bell M."/>
            <person name="Dedhia N."/>
            <person name="Parnell L."/>
            <person name="Shah R."/>
            <person name="Rodriguez M."/>
            <person name="Hoon See L."/>
            <person name="Vil D."/>
            <person name="Baker J."/>
            <person name="Kirchoff K."/>
            <person name="Toth K."/>
            <person name="King L."/>
            <person name="Bahret A."/>
            <person name="Miller B."/>
            <person name="Marra M.A."/>
            <person name="Martienssen R."/>
            <person name="McCombie W.R."/>
            <person name="Wilson R.K."/>
            <person name="Murphy G."/>
            <person name="Bancroft I."/>
            <person name="Volckaert G."/>
            <person name="Wambutt R."/>
            <person name="Duesterhoeft A."/>
            <person name="Stiekema W."/>
            <person name="Pohl T."/>
            <person name="Entian K.-D."/>
            <person name="Terryn N."/>
            <person name="Hartley N."/>
            <person name="Bent E."/>
            <person name="Johnson S."/>
            <person name="Langham S.-A."/>
            <person name="McCullagh B."/>
            <person name="Robben J."/>
            <person name="Grymonprez B."/>
            <person name="Zimmermann W."/>
            <person name="Ramsperger U."/>
            <person name="Wedler H."/>
            <person name="Balke K."/>
            <person name="Wedler E."/>
            <person name="Peters S."/>
            <person name="van Staveren M."/>
            <person name="Dirkse W."/>
            <person name="Mooijman P."/>
            <person name="Klein Lankhorst R."/>
            <person name="Weitzenegger T."/>
            <person name="Bothe G."/>
            <person name="Rose M."/>
            <person name="Hauf J."/>
            <person name="Berneiser S."/>
            <person name="Hempel S."/>
            <person name="Feldpausch M."/>
            <person name="Lamberth S."/>
            <person name="Villarroel R."/>
            <person name="Gielen J."/>
            <person name="Ardiles W."/>
            <person name="Bents O."/>
            <person name="Lemcke K."/>
            <person name="Kolesov G."/>
            <person name="Mayer K.F.X."/>
            <person name="Rudd S."/>
            <person name="Schoof H."/>
            <person name="Schueller C."/>
            <person name="Zaccaria P."/>
            <person name="Mewes H.-W."/>
            <person name="Bevan M."/>
            <person name="Fransz P.F."/>
        </authorList>
    </citation>
    <scope>NUCLEOTIDE SEQUENCE [LARGE SCALE GENOMIC DNA]</scope>
    <source>
        <strain>cv. Columbia</strain>
    </source>
</reference>
<reference key="2">
    <citation type="journal article" date="2017" name="Plant J.">
        <title>Araport11: a complete reannotation of the Arabidopsis thaliana reference genome.</title>
        <authorList>
            <person name="Cheng C.Y."/>
            <person name="Krishnakumar V."/>
            <person name="Chan A.P."/>
            <person name="Thibaud-Nissen F."/>
            <person name="Schobel S."/>
            <person name="Town C.D."/>
        </authorList>
    </citation>
    <scope>GENOME REANNOTATION</scope>
    <source>
        <strain>cv. Columbia</strain>
    </source>
</reference>
<reference key="3">
    <citation type="journal article" date="2003" name="Science">
        <title>Empirical analysis of transcriptional activity in the Arabidopsis genome.</title>
        <authorList>
            <person name="Yamada K."/>
            <person name="Lim J."/>
            <person name="Dale J.M."/>
            <person name="Chen H."/>
            <person name="Shinn P."/>
            <person name="Palm C.J."/>
            <person name="Southwick A.M."/>
            <person name="Wu H.C."/>
            <person name="Kim C.J."/>
            <person name="Nguyen M."/>
            <person name="Pham P.K."/>
            <person name="Cheuk R.F."/>
            <person name="Karlin-Newmann G."/>
            <person name="Liu S.X."/>
            <person name="Lam B."/>
            <person name="Sakano H."/>
            <person name="Wu T."/>
            <person name="Yu G."/>
            <person name="Miranda M."/>
            <person name="Quach H.L."/>
            <person name="Tripp M."/>
            <person name="Chang C.H."/>
            <person name="Lee J.M."/>
            <person name="Toriumi M.J."/>
            <person name="Chan M.M."/>
            <person name="Tang C.C."/>
            <person name="Onodera C.S."/>
            <person name="Deng J.M."/>
            <person name="Akiyama K."/>
            <person name="Ansari Y."/>
            <person name="Arakawa T."/>
            <person name="Banh J."/>
            <person name="Banno F."/>
            <person name="Bowser L."/>
            <person name="Brooks S.Y."/>
            <person name="Carninci P."/>
            <person name="Chao Q."/>
            <person name="Choy N."/>
            <person name="Enju A."/>
            <person name="Goldsmith A.D."/>
            <person name="Gurjal M."/>
            <person name="Hansen N.F."/>
            <person name="Hayashizaki Y."/>
            <person name="Johnson-Hopson C."/>
            <person name="Hsuan V.W."/>
            <person name="Iida K."/>
            <person name="Karnes M."/>
            <person name="Khan S."/>
            <person name="Koesema E."/>
            <person name="Ishida J."/>
            <person name="Jiang P.X."/>
            <person name="Jones T."/>
            <person name="Kawai J."/>
            <person name="Kamiya A."/>
            <person name="Meyers C."/>
            <person name="Nakajima M."/>
            <person name="Narusaka M."/>
            <person name="Seki M."/>
            <person name="Sakurai T."/>
            <person name="Satou M."/>
            <person name="Tamse R."/>
            <person name="Vaysberg M."/>
            <person name="Wallender E.K."/>
            <person name="Wong C."/>
            <person name="Yamamura Y."/>
            <person name="Yuan S."/>
            <person name="Shinozaki K."/>
            <person name="Davis R.W."/>
            <person name="Theologis A."/>
            <person name="Ecker J.R."/>
        </authorList>
    </citation>
    <scope>NUCLEOTIDE SEQUENCE [LARGE SCALE MRNA] (ISOFORM 1)</scope>
    <source>
        <strain>cv. Columbia</strain>
    </source>
</reference>
<reference key="4">
    <citation type="journal article" date="2004" name="Proc. Natl. Acad. Sci. U.S.A.">
        <title>Arabidopsis thaliana DNA gyrase is targeted to chloroplasts and mitochondria.</title>
        <authorList>
            <person name="Wall M.K."/>
            <person name="Mitchenall L.A."/>
            <person name="Maxwell A."/>
        </authorList>
    </citation>
    <scope>FUNCTION</scope>
    <scope>SUBCELLULAR LOCATION</scope>
</reference>
<feature type="transit peptide" description="Mitochondrion" evidence="2">
    <location>
        <begin position="1"/>
        <end status="unknown"/>
    </location>
</feature>
<feature type="chain" id="PRO_0000247949" description="DNA gyrase subunit B, mitochondrial">
    <location>
        <begin status="unknown"/>
        <end position="732"/>
    </location>
</feature>
<feature type="domain" description="Toprim" evidence="3">
    <location>
        <begin position="513"/>
        <end position="620"/>
    </location>
</feature>
<feature type="binding site" evidence="3">
    <location>
        <position position="519"/>
    </location>
    <ligand>
        <name>Mg(2+)</name>
        <dbReference type="ChEBI" id="CHEBI:18420"/>
        <label>1</label>
        <note>catalytic</note>
    </ligand>
</feature>
<feature type="binding site" evidence="3">
    <location>
        <position position="593"/>
    </location>
    <ligand>
        <name>Mg(2+)</name>
        <dbReference type="ChEBI" id="CHEBI:18420"/>
        <label>1</label>
        <note>catalytic</note>
    </ligand>
</feature>
<feature type="binding site" evidence="3">
    <location>
        <position position="593"/>
    </location>
    <ligand>
        <name>Mg(2+)</name>
        <dbReference type="ChEBI" id="CHEBI:18420"/>
        <label>2</label>
    </ligand>
</feature>
<feature type="binding site" evidence="3">
    <location>
        <position position="595"/>
    </location>
    <ligand>
        <name>Mg(2+)</name>
        <dbReference type="ChEBI" id="CHEBI:18420"/>
        <label>2</label>
    </ligand>
</feature>
<feature type="site" description="Interaction with DNA" evidence="3">
    <location>
        <position position="544"/>
    </location>
</feature>
<feature type="site" description="Interaction with DNA" evidence="3">
    <location>
        <position position="547"/>
    </location>
</feature>
<feature type="splice variant" id="VSP_020235" description="In isoform 2." evidence="5">
    <original>EIFIVE</original>
    <variation>GMYWPS</variation>
    <location>
        <begin position="514"/>
        <end position="519"/>
    </location>
</feature>
<feature type="splice variant" id="VSP_020236" description="In isoform 2." evidence="5">
    <location>
        <begin position="520"/>
        <end position="732"/>
    </location>
</feature>
<comment type="function">
    <text evidence="4">A type II topoisomerase that negatively supercoils closed circular double-stranded DNA in an ATP-dependent manner.</text>
</comment>
<comment type="catalytic activity">
    <reaction evidence="3">
        <text>ATP-dependent breakage, passage and rejoining of double-stranded DNA.</text>
        <dbReference type="EC" id="5.6.2.2"/>
    </reaction>
</comment>
<comment type="cofactor">
    <cofactor evidence="3">
        <name>Mg(2+)</name>
        <dbReference type="ChEBI" id="CHEBI:18420"/>
    </cofactor>
    <cofactor evidence="3">
        <name>Mn(2+)</name>
        <dbReference type="ChEBI" id="CHEBI:29035"/>
    </cofactor>
    <cofactor evidence="3">
        <name>Ca(2+)</name>
        <dbReference type="ChEBI" id="CHEBI:29108"/>
    </cofactor>
    <text evidence="3">Binds two Mg(2+) per subunit. The magnesium ions form salt bridges with both the protein and the DNA. Can also accept other divalent metal cations, such as Mn(2+) or Ca(2+).</text>
</comment>
<comment type="subunit">
    <text evidence="1">Made up of two chains. The A chain is responsible for DNA breakage and rejoining; the B chain catalyzes ATP hydrolysis.</text>
</comment>
<comment type="subcellular location">
    <subcellularLocation>
        <location evidence="4">Mitochondrion</location>
    </subcellularLocation>
</comment>
<comment type="alternative products">
    <event type="alternative splicing"/>
    <isoform>
        <id>Q94BZ7-1</id>
        <name>1</name>
        <sequence type="displayed"/>
    </isoform>
    <isoform>
        <id>Q94BZ7-2</id>
        <name>2</name>
        <sequence type="described" ref="VSP_020235 VSP_020236"/>
    </isoform>
</comment>
<comment type="miscellaneous">
    <molecule>Isoform 2</molecule>
    <text evidence="5">May be due to an intron retention.</text>
</comment>
<comment type="similarity">
    <text evidence="5">Belongs to the type II topoisomerase GyrB family.</text>
</comment>
<comment type="sequence caution" evidence="5">
    <conflict type="erroneous gene model prediction">
        <sequence resource="EMBL-CDS" id="CAC05495"/>
    </conflict>
</comment>
<evidence type="ECO:0000250" key="1">
    <source>
        <dbReference type="UniProtKB" id="P0AES6"/>
    </source>
</evidence>
<evidence type="ECO:0000255" key="2"/>
<evidence type="ECO:0000255" key="3">
    <source>
        <dbReference type="PROSITE-ProRule" id="PRU00995"/>
    </source>
</evidence>
<evidence type="ECO:0000269" key="4">
    <source>
    </source>
</evidence>
<evidence type="ECO:0000305" key="5"/>
<dbReference type="EC" id="5.6.2.2" evidence="3"/>
<dbReference type="EMBL" id="AL391716">
    <property type="protein sequence ID" value="CAC05495.1"/>
    <property type="status" value="ALT_SEQ"/>
    <property type="molecule type" value="Genomic_DNA"/>
</dbReference>
<dbReference type="EMBL" id="CP002688">
    <property type="protein sequence ID" value="AED90701.1"/>
    <property type="molecule type" value="Genomic_DNA"/>
</dbReference>
<dbReference type="EMBL" id="CP002688">
    <property type="protein sequence ID" value="AED90702.1"/>
    <property type="molecule type" value="Genomic_DNA"/>
</dbReference>
<dbReference type="EMBL" id="CP002688">
    <property type="protein sequence ID" value="ANM68979.1"/>
    <property type="molecule type" value="Genomic_DNA"/>
</dbReference>
<dbReference type="EMBL" id="AY039521">
    <property type="protein sequence ID" value="AAK62578.1"/>
    <property type="molecule type" value="mRNA"/>
</dbReference>
<dbReference type="EMBL" id="AY142041">
    <property type="protein sequence ID" value="AAM98305.1"/>
    <property type="molecule type" value="mRNA"/>
</dbReference>
<dbReference type="RefSeq" id="NP_001318477.1">
    <molecule id="Q94BZ7-2"/>
    <property type="nucleotide sequence ID" value="NM_001342753.1"/>
</dbReference>
<dbReference type="RefSeq" id="NP_568133.1">
    <molecule id="Q94BZ7-1"/>
    <property type="nucleotide sequence ID" value="NM_120495.3"/>
</dbReference>
<dbReference type="RefSeq" id="NP_850762.1">
    <molecule id="Q94BZ7-2"/>
    <property type="nucleotide sequence ID" value="NM_180431.2"/>
</dbReference>
<dbReference type="SMR" id="Q94BZ7"/>
<dbReference type="FunCoup" id="Q94BZ7">
    <property type="interactions" value="303"/>
</dbReference>
<dbReference type="STRING" id="3702.Q94BZ7"/>
<dbReference type="PaxDb" id="3702-AT5G04130.1"/>
<dbReference type="ProteomicsDB" id="247327">
    <molecule id="Q94BZ7-1"/>
</dbReference>
<dbReference type="EnsemblPlants" id="AT5G04130.1">
    <molecule id="Q94BZ7-1"/>
    <property type="protein sequence ID" value="AT5G04130.1"/>
    <property type="gene ID" value="AT5G04130"/>
</dbReference>
<dbReference type="EnsemblPlants" id="AT5G04130.2">
    <molecule id="Q94BZ7-2"/>
    <property type="protein sequence ID" value="AT5G04130.2"/>
    <property type="gene ID" value="AT5G04130"/>
</dbReference>
<dbReference type="EnsemblPlants" id="AT5G04130.3">
    <molecule id="Q94BZ7-2"/>
    <property type="protein sequence ID" value="AT5G04130.3"/>
    <property type="gene ID" value="AT5G04130"/>
</dbReference>
<dbReference type="GeneID" id="830291"/>
<dbReference type="Gramene" id="AT5G04130.1">
    <molecule id="Q94BZ7-1"/>
    <property type="protein sequence ID" value="AT5G04130.1"/>
    <property type="gene ID" value="AT5G04130"/>
</dbReference>
<dbReference type="Gramene" id="AT5G04130.2">
    <molecule id="Q94BZ7-2"/>
    <property type="protein sequence ID" value="AT5G04130.2"/>
    <property type="gene ID" value="AT5G04130"/>
</dbReference>
<dbReference type="Gramene" id="AT5G04130.3">
    <molecule id="Q94BZ7-2"/>
    <property type="protein sequence ID" value="AT5G04130.3"/>
    <property type="gene ID" value="AT5G04130"/>
</dbReference>
<dbReference type="KEGG" id="ath:AT5G04130"/>
<dbReference type="Araport" id="AT5G04130"/>
<dbReference type="TAIR" id="AT5G04130">
    <property type="gene designation" value="GYRB2"/>
</dbReference>
<dbReference type="eggNOG" id="KOG0355">
    <property type="taxonomic scope" value="Eukaryota"/>
</dbReference>
<dbReference type="HOGENOM" id="CLU_006146_4_1_1"/>
<dbReference type="InParanoid" id="Q94BZ7"/>
<dbReference type="OMA" id="HFRNITH"/>
<dbReference type="PhylomeDB" id="Q94BZ7"/>
<dbReference type="CD-CODE" id="4299E36E">
    <property type="entry name" value="Nucleolus"/>
</dbReference>
<dbReference type="PRO" id="PR:Q94BZ7"/>
<dbReference type="Proteomes" id="UP000006548">
    <property type="component" value="Chromosome 5"/>
</dbReference>
<dbReference type="ExpressionAtlas" id="Q94BZ7">
    <property type="expression patterns" value="baseline and differential"/>
</dbReference>
<dbReference type="GO" id="GO:0005694">
    <property type="term" value="C:chromosome"/>
    <property type="evidence" value="ECO:0007669"/>
    <property type="project" value="InterPro"/>
</dbReference>
<dbReference type="GO" id="GO:0005739">
    <property type="term" value="C:mitochondrion"/>
    <property type="evidence" value="ECO:0007005"/>
    <property type="project" value="TAIR"/>
</dbReference>
<dbReference type="GO" id="GO:0005524">
    <property type="term" value="F:ATP binding"/>
    <property type="evidence" value="ECO:0007669"/>
    <property type="project" value="UniProtKB-KW"/>
</dbReference>
<dbReference type="GO" id="GO:0003677">
    <property type="term" value="F:DNA binding"/>
    <property type="evidence" value="ECO:0007669"/>
    <property type="project" value="UniProtKB-KW"/>
</dbReference>
<dbReference type="GO" id="GO:0003918">
    <property type="term" value="F:DNA topoisomerase type II (double strand cut, ATP-hydrolyzing) activity"/>
    <property type="evidence" value="ECO:0007669"/>
    <property type="project" value="UniProtKB-EC"/>
</dbReference>
<dbReference type="GO" id="GO:0046872">
    <property type="term" value="F:metal ion binding"/>
    <property type="evidence" value="ECO:0007669"/>
    <property type="project" value="UniProtKB-KW"/>
</dbReference>
<dbReference type="GO" id="GO:0006265">
    <property type="term" value="P:DNA topological change"/>
    <property type="evidence" value="ECO:0007669"/>
    <property type="project" value="InterPro"/>
</dbReference>
<dbReference type="CDD" id="cd16928">
    <property type="entry name" value="HATPase_GyrB-like"/>
    <property type="match status" value="1"/>
</dbReference>
<dbReference type="CDD" id="cd00822">
    <property type="entry name" value="TopoII_Trans_DNA_gyrase"/>
    <property type="match status" value="1"/>
</dbReference>
<dbReference type="CDD" id="cd03366">
    <property type="entry name" value="TOPRIM_TopoIIA_GyrB"/>
    <property type="match status" value="1"/>
</dbReference>
<dbReference type="FunFam" id="3.30.230.10:FF:000005">
    <property type="entry name" value="DNA gyrase subunit B"/>
    <property type="match status" value="1"/>
</dbReference>
<dbReference type="FunFam" id="3.30.565.10:FF:000002">
    <property type="entry name" value="DNA gyrase subunit B"/>
    <property type="match status" value="1"/>
</dbReference>
<dbReference type="FunFam" id="3.40.50.670:FF:000002">
    <property type="entry name" value="DNA gyrase subunit B"/>
    <property type="match status" value="1"/>
</dbReference>
<dbReference type="Gene3D" id="3.30.230.10">
    <property type="match status" value="1"/>
</dbReference>
<dbReference type="Gene3D" id="3.40.50.670">
    <property type="match status" value="1"/>
</dbReference>
<dbReference type="Gene3D" id="3.30.565.10">
    <property type="entry name" value="Histidine kinase-like ATPase, C-terminal domain"/>
    <property type="match status" value="1"/>
</dbReference>
<dbReference type="InterPro" id="IPR002288">
    <property type="entry name" value="DNA_gyrase_B_C"/>
</dbReference>
<dbReference type="InterPro" id="IPR011557">
    <property type="entry name" value="GyrB"/>
</dbReference>
<dbReference type="InterPro" id="IPR036890">
    <property type="entry name" value="HATPase_C_sf"/>
</dbReference>
<dbReference type="InterPro" id="IPR020568">
    <property type="entry name" value="Ribosomal_Su5_D2-typ_SF"/>
</dbReference>
<dbReference type="InterPro" id="IPR014721">
    <property type="entry name" value="Ribsml_uS5_D2-typ_fold_subgr"/>
</dbReference>
<dbReference type="InterPro" id="IPR001241">
    <property type="entry name" value="Topo_IIA"/>
</dbReference>
<dbReference type="InterPro" id="IPR013760">
    <property type="entry name" value="Topo_IIA-like_dom_sf"/>
</dbReference>
<dbReference type="InterPro" id="IPR000565">
    <property type="entry name" value="Topo_IIA_B"/>
</dbReference>
<dbReference type="InterPro" id="IPR013759">
    <property type="entry name" value="Topo_IIA_B_C"/>
</dbReference>
<dbReference type="InterPro" id="IPR013506">
    <property type="entry name" value="Topo_IIA_bsu_dom2"/>
</dbReference>
<dbReference type="InterPro" id="IPR018522">
    <property type="entry name" value="TopoIIA_CS"/>
</dbReference>
<dbReference type="InterPro" id="IPR006171">
    <property type="entry name" value="TOPRIM_dom"/>
</dbReference>
<dbReference type="InterPro" id="IPR034160">
    <property type="entry name" value="TOPRIM_GyrB"/>
</dbReference>
<dbReference type="NCBIfam" id="TIGR01059">
    <property type="entry name" value="gyrB"/>
    <property type="match status" value="1"/>
</dbReference>
<dbReference type="NCBIfam" id="NF004189">
    <property type="entry name" value="PRK05644.1"/>
    <property type="match status" value="1"/>
</dbReference>
<dbReference type="PANTHER" id="PTHR45866:SF1">
    <property type="entry name" value="DNA GYRASE SUBUNIT B, MITOCHONDRIAL"/>
    <property type="match status" value="1"/>
</dbReference>
<dbReference type="PANTHER" id="PTHR45866">
    <property type="entry name" value="DNA GYRASE/TOPOISOMERASE SUBUNIT B"/>
    <property type="match status" value="1"/>
</dbReference>
<dbReference type="Pfam" id="PF00204">
    <property type="entry name" value="DNA_gyraseB"/>
    <property type="match status" value="1"/>
</dbReference>
<dbReference type="Pfam" id="PF00986">
    <property type="entry name" value="DNA_gyraseB_C"/>
    <property type="match status" value="1"/>
</dbReference>
<dbReference type="Pfam" id="PF02518">
    <property type="entry name" value="HATPase_c"/>
    <property type="match status" value="1"/>
</dbReference>
<dbReference type="Pfam" id="PF01751">
    <property type="entry name" value="Toprim"/>
    <property type="match status" value="1"/>
</dbReference>
<dbReference type="PRINTS" id="PR01159">
    <property type="entry name" value="DNAGYRASEB"/>
</dbReference>
<dbReference type="PRINTS" id="PR00418">
    <property type="entry name" value="TPI2FAMILY"/>
</dbReference>
<dbReference type="SMART" id="SM00387">
    <property type="entry name" value="HATPase_c"/>
    <property type="match status" value="1"/>
</dbReference>
<dbReference type="SMART" id="SM00433">
    <property type="entry name" value="TOP2c"/>
    <property type="match status" value="1"/>
</dbReference>
<dbReference type="SUPFAM" id="SSF55874">
    <property type="entry name" value="ATPase domain of HSP90 chaperone/DNA topoisomerase II/histidine kinase"/>
    <property type="match status" value="1"/>
</dbReference>
<dbReference type="SUPFAM" id="SSF54211">
    <property type="entry name" value="Ribosomal protein S5 domain 2-like"/>
    <property type="match status" value="1"/>
</dbReference>
<dbReference type="SUPFAM" id="SSF56719">
    <property type="entry name" value="Type II DNA topoisomerase"/>
    <property type="match status" value="1"/>
</dbReference>
<dbReference type="PROSITE" id="PS00177">
    <property type="entry name" value="TOPOISOMERASE_II"/>
    <property type="match status" value="1"/>
</dbReference>
<dbReference type="PROSITE" id="PS50880">
    <property type="entry name" value="TOPRIM"/>
    <property type="match status" value="1"/>
</dbReference>
<name>GYRBM_ARATH</name>
<proteinExistence type="evidence at transcript level"/>
<protein>
    <recommendedName>
        <fullName>DNA gyrase subunit B, mitochondrial</fullName>
        <ecNumber evidence="3">5.6.2.2</ecNumber>
    </recommendedName>
</protein>
<organism>
    <name type="scientific">Arabidopsis thaliana</name>
    <name type="common">Mouse-ear cress</name>
    <dbReference type="NCBI Taxonomy" id="3702"/>
    <lineage>
        <taxon>Eukaryota</taxon>
        <taxon>Viridiplantae</taxon>
        <taxon>Streptophyta</taxon>
        <taxon>Embryophyta</taxon>
        <taxon>Tracheophyta</taxon>
        <taxon>Spermatophyta</taxon>
        <taxon>Magnoliopsida</taxon>
        <taxon>eudicotyledons</taxon>
        <taxon>Gunneridae</taxon>
        <taxon>Pentapetalae</taxon>
        <taxon>rosids</taxon>
        <taxon>malvids</taxon>
        <taxon>Brassicales</taxon>
        <taxon>Brassicaceae</taxon>
        <taxon>Camelineae</taxon>
        <taxon>Arabidopsis</taxon>
    </lineage>
</organism>
<accession>Q94BZ7</accession>
<accession>Q3E9M5</accession>
<accession>Q9FYE7</accession>
<keyword id="KW-0025">Alternative splicing</keyword>
<keyword id="KW-0067">ATP-binding</keyword>
<keyword id="KW-0238">DNA-binding</keyword>
<keyword id="KW-0413">Isomerase</keyword>
<keyword id="KW-0460">Magnesium</keyword>
<keyword id="KW-0479">Metal-binding</keyword>
<keyword id="KW-0496">Mitochondrion</keyword>
<keyword id="KW-0547">Nucleotide-binding</keyword>
<keyword id="KW-1185">Reference proteome</keyword>
<keyword id="KW-0799">Topoisomerase</keyword>
<keyword id="KW-0809">Transit peptide</keyword>